<gene>
    <name evidence="1" type="primary">nusB</name>
    <name type="ordered locus">Fnod_0096</name>
</gene>
<organism>
    <name type="scientific">Fervidobacterium nodosum (strain ATCC 35602 / DSM 5306 / Rt17-B1)</name>
    <dbReference type="NCBI Taxonomy" id="381764"/>
    <lineage>
        <taxon>Bacteria</taxon>
        <taxon>Thermotogati</taxon>
        <taxon>Thermotogota</taxon>
        <taxon>Thermotogae</taxon>
        <taxon>Thermotogales</taxon>
        <taxon>Fervidobacteriaceae</taxon>
        <taxon>Fervidobacterium</taxon>
    </lineage>
</organism>
<accession>A7HJ80</accession>
<evidence type="ECO:0000255" key="1">
    <source>
        <dbReference type="HAMAP-Rule" id="MF_00073"/>
    </source>
</evidence>
<keyword id="KW-1185">Reference proteome</keyword>
<keyword id="KW-0694">RNA-binding</keyword>
<keyword id="KW-0804">Transcription</keyword>
<keyword id="KW-0889">Transcription antitermination</keyword>
<keyword id="KW-0805">Transcription regulation</keyword>
<dbReference type="EMBL" id="CP000771">
    <property type="protein sequence ID" value="ABS59963.1"/>
    <property type="molecule type" value="Genomic_DNA"/>
</dbReference>
<dbReference type="RefSeq" id="WP_011993286.1">
    <property type="nucleotide sequence ID" value="NC_009718.1"/>
</dbReference>
<dbReference type="SMR" id="A7HJ80"/>
<dbReference type="STRING" id="381764.Fnod_0096"/>
<dbReference type="KEGG" id="fno:Fnod_0096"/>
<dbReference type="eggNOG" id="COG0781">
    <property type="taxonomic scope" value="Bacteria"/>
</dbReference>
<dbReference type="HOGENOM" id="CLU_087843_3_0_0"/>
<dbReference type="OrthoDB" id="9811381at2"/>
<dbReference type="Proteomes" id="UP000002415">
    <property type="component" value="Chromosome"/>
</dbReference>
<dbReference type="GO" id="GO:0005829">
    <property type="term" value="C:cytosol"/>
    <property type="evidence" value="ECO:0007669"/>
    <property type="project" value="TreeGrafter"/>
</dbReference>
<dbReference type="GO" id="GO:0003723">
    <property type="term" value="F:RNA binding"/>
    <property type="evidence" value="ECO:0007669"/>
    <property type="project" value="UniProtKB-UniRule"/>
</dbReference>
<dbReference type="GO" id="GO:0006353">
    <property type="term" value="P:DNA-templated transcription termination"/>
    <property type="evidence" value="ECO:0007669"/>
    <property type="project" value="UniProtKB-UniRule"/>
</dbReference>
<dbReference type="GO" id="GO:0031564">
    <property type="term" value="P:transcription antitermination"/>
    <property type="evidence" value="ECO:0007669"/>
    <property type="project" value="UniProtKB-KW"/>
</dbReference>
<dbReference type="CDD" id="cd00619">
    <property type="entry name" value="Terminator_NusB"/>
    <property type="match status" value="1"/>
</dbReference>
<dbReference type="Gene3D" id="1.10.940.10">
    <property type="entry name" value="NusB-like"/>
    <property type="match status" value="1"/>
</dbReference>
<dbReference type="HAMAP" id="MF_00073">
    <property type="entry name" value="NusB"/>
    <property type="match status" value="1"/>
</dbReference>
<dbReference type="InterPro" id="IPR035926">
    <property type="entry name" value="NusB-like_sf"/>
</dbReference>
<dbReference type="InterPro" id="IPR011605">
    <property type="entry name" value="NusB_fam"/>
</dbReference>
<dbReference type="InterPro" id="IPR006027">
    <property type="entry name" value="NusB_RsmB_TIM44"/>
</dbReference>
<dbReference type="NCBIfam" id="TIGR01951">
    <property type="entry name" value="nusB"/>
    <property type="match status" value="1"/>
</dbReference>
<dbReference type="PANTHER" id="PTHR11078:SF3">
    <property type="entry name" value="ANTITERMINATION NUSB DOMAIN-CONTAINING PROTEIN"/>
    <property type="match status" value="1"/>
</dbReference>
<dbReference type="PANTHER" id="PTHR11078">
    <property type="entry name" value="N UTILIZATION SUBSTANCE PROTEIN B-RELATED"/>
    <property type="match status" value="1"/>
</dbReference>
<dbReference type="Pfam" id="PF01029">
    <property type="entry name" value="NusB"/>
    <property type="match status" value="1"/>
</dbReference>
<dbReference type="SUPFAM" id="SSF48013">
    <property type="entry name" value="NusB-like"/>
    <property type="match status" value="1"/>
</dbReference>
<name>NUSB_FERNB</name>
<sequence>MVSKRRVLREMVVKLFFQREFRHNEFEEIFSETLNKIRDNTIKADFKRYVEGVFHNLSTIDNIISNHLINWSFDRLSYLERNVLRVGTYELIYEENIPIEVTINEMIEIAKKYGSEESGKFVNGILDRIAKEHAPKEKFNL</sequence>
<proteinExistence type="inferred from homology"/>
<comment type="function">
    <text evidence="1">Involved in transcription antitermination. Required for transcription of ribosomal RNA (rRNA) genes. Binds specifically to the boxA antiterminator sequence of the ribosomal RNA (rrn) operons.</text>
</comment>
<comment type="similarity">
    <text evidence="1">Belongs to the NusB family.</text>
</comment>
<reference key="1">
    <citation type="submission" date="2007-07" db="EMBL/GenBank/DDBJ databases">
        <title>Complete sequence of Fervidobacterium nodosum Rt17-B1.</title>
        <authorList>
            <consortium name="US DOE Joint Genome Institute"/>
            <person name="Copeland A."/>
            <person name="Lucas S."/>
            <person name="Lapidus A."/>
            <person name="Barry K."/>
            <person name="Glavina del Rio T."/>
            <person name="Dalin E."/>
            <person name="Tice H."/>
            <person name="Pitluck S."/>
            <person name="Saunders E."/>
            <person name="Brettin T."/>
            <person name="Bruce D."/>
            <person name="Detter J.C."/>
            <person name="Han C."/>
            <person name="Schmutz J."/>
            <person name="Larimer F."/>
            <person name="Land M."/>
            <person name="Hauser L."/>
            <person name="Kyrpides N."/>
            <person name="Mikhailova N."/>
            <person name="Nelson K."/>
            <person name="Gogarten J.P."/>
            <person name="Noll K."/>
            <person name="Richardson P."/>
        </authorList>
    </citation>
    <scope>NUCLEOTIDE SEQUENCE [LARGE SCALE GENOMIC DNA]</scope>
    <source>
        <strain>ATCC 35602 / DSM 5306 / Rt17-B1</strain>
    </source>
</reference>
<protein>
    <recommendedName>
        <fullName evidence="1">Transcription antitermination protein NusB</fullName>
    </recommendedName>
    <alternativeName>
        <fullName evidence="1">Antitermination factor NusB</fullName>
    </alternativeName>
</protein>
<feature type="chain" id="PRO_1000071192" description="Transcription antitermination protein NusB">
    <location>
        <begin position="1"/>
        <end position="141"/>
    </location>
</feature>